<gene>
    <name evidence="1" type="primary">ureC</name>
    <name type="ordered locus">PputGB1_2935</name>
</gene>
<accession>B0KUZ7</accession>
<organism>
    <name type="scientific">Pseudomonas putida (strain GB-1)</name>
    <dbReference type="NCBI Taxonomy" id="76869"/>
    <lineage>
        <taxon>Bacteria</taxon>
        <taxon>Pseudomonadati</taxon>
        <taxon>Pseudomonadota</taxon>
        <taxon>Gammaproteobacteria</taxon>
        <taxon>Pseudomonadales</taxon>
        <taxon>Pseudomonadaceae</taxon>
        <taxon>Pseudomonas</taxon>
    </lineage>
</organism>
<evidence type="ECO:0000255" key="1">
    <source>
        <dbReference type="HAMAP-Rule" id="MF_01953"/>
    </source>
</evidence>
<protein>
    <recommendedName>
        <fullName evidence="1">Urease subunit alpha</fullName>
        <ecNumber evidence="1">3.5.1.5</ecNumber>
    </recommendedName>
    <alternativeName>
        <fullName evidence="1">Urea amidohydrolase subunit alpha</fullName>
    </alternativeName>
</protein>
<keyword id="KW-0963">Cytoplasm</keyword>
<keyword id="KW-0378">Hydrolase</keyword>
<keyword id="KW-0479">Metal-binding</keyword>
<keyword id="KW-0533">Nickel</keyword>
<sequence>MSRISRQAYADMFGPTVGDRVRLADTALWVEVEKDFTVYGEEVKFGGGKVIRDGMGQGQMLAAEAMDLVLTNALIIDHWGIVKADIGIKHGRIAVIGKAGNPDVQPGVNVPVGPGTEVIAAEGKIVTAGGVDSHIHFICPQQVDEALNSGVTTFIGGGTGPATGTNATTCTPGPWYLARMLQAADSLPINIGLLGKGNASRPEALREQIAAGAVGLKLHEDWGSTPAAIDCCLGVAEEMDIQVAIHTDTLNESGCIEDTLAAIGDRTIHTFHTEGAGGGHAPDIIRAAGQANVLPSSTNPTLPYTINTVDEHLDMLMVCHHLDPSIAEDVAFAESRIRRETIAAEDILHDMGAFAMTSSDSQAMGRVGEVVLRTWQVAHQMKLRRGPLAPDTYYSDNFRVKRYIAKYTINPALTHGIGHEVGSVEVGKLADLVLWSPAFFAVKPALVLKGGMIVTAPMGDINGSIPTPQPVHYRPMFGALGAARHATRMTFLPQAAMDRGLAEELNLRSLIGVVNGCRRVRKPDMVHNTLQPLIEVDAQTYQVRADGELLVCEPASELPLAQRYFLF</sequence>
<proteinExistence type="inferred from homology"/>
<dbReference type="EC" id="3.5.1.5" evidence="1"/>
<dbReference type="EMBL" id="CP000926">
    <property type="protein sequence ID" value="ABY98829.1"/>
    <property type="molecule type" value="Genomic_DNA"/>
</dbReference>
<dbReference type="RefSeq" id="WP_012272562.1">
    <property type="nucleotide sequence ID" value="NC_010322.1"/>
</dbReference>
<dbReference type="SMR" id="B0KUZ7"/>
<dbReference type="MEROPS" id="M38.982"/>
<dbReference type="KEGG" id="ppg:PputGB1_2935"/>
<dbReference type="eggNOG" id="COG0804">
    <property type="taxonomic scope" value="Bacteria"/>
</dbReference>
<dbReference type="HOGENOM" id="CLU_000980_0_0_6"/>
<dbReference type="UniPathway" id="UPA00258">
    <property type="reaction ID" value="UER00370"/>
</dbReference>
<dbReference type="Proteomes" id="UP000002157">
    <property type="component" value="Chromosome"/>
</dbReference>
<dbReference type="GO" id="GO:0005737">
    <property type="term" value="C:cytoplasm"/>
    <property type="evidence" value="ECO:0007669"/>
    <property type="project" value="UniProtKB-SubCell"/>
</dbReference>
<dbReference type="GO" id="GO:0016151">
    <property type="term" value="F:nickel cation binding"/>
    <property type="evidence" value="ECO:0007669"/>
    <property type="project" value="UniProtKB-UniRule"/>
</dbReference>
<dbReference type="GO" id="GO:0009039">
    <property type="term" value="F:urease activity"/>
    <property type="evidence" value="ECO:0007669"/>
    <property type="project" value="UniProtKB-UniRule"/>
</dbReference>
<dbReference type="GO" id="GO:0043419">
    <property type="term" value="P:urea catabolic process"/>
    <property type="evidence" value="ECO:0007669"/>
    <property type="project" value="UniProtKB-UniRule"/>
</dbReference>
<dbReference type="CDD" id="cd00375">
    <property type="entry name" value="Urease_alpha"/>
    <property type="match status" value="1"/>
</dbReference>
<dbReference type="Gene3D" id="3.20.20.140">
    <property type="entry name" value="Metal-dependent hydrolases"/>
    <property type="match status" value="1"/>
</dbReference>
<dbReference type="Gene3D" id="2.30.40.10">
    <property type="entry name" value="Urease, subunit C, domain 1"/>
    <property type="match status" value="1"/>
</dbReference>
<dbReference type="HAMAP" id="MF_01953">
    <property type="entry name" value="Urease_alpha"/>
    <property type="match status" value="1"/>
</dbReference>
<dbReference type="InterPro" id="IPR006680">
    <property type="entry name" value="Amidohydro-rel"/>
</dbReference>
<dbReference type="InterPro" id="IPR011059">
    <property type="entry name" value="Metal-dep_hydrolase_composite"/>
</dbReference>
<dbReference type="InterPro" id="IPR032466">
    <property type="entry name" value="Metal_Hydrolase"/>
</dbReference>
<dbReference type="InterPro" id="IPR011612">
    <property type="entry name" value="Urease_alpha_N_dom"/>
</dbReference>
<dbReference type="InterPro" id="IPR050112">
    <property type="entry name" value="Urease_alpha_subunit"/>
</dbReference>
<dbReference type="InterPro" id="IPR017950">
    <property type="entry name" value="Urease_AS"/>
</dbReference>
<dbReference type="InterPro" id="IPR005848">
    <property type="entry name" value="Urease_asu"/>
</dbReference>
<dbReference type="InterPro" id="IPR017951">
    <property type="entry name" value="Urease_asu_c"/>
</dbReference>
<dbReference type="InterPro" id="IPR029754">
    <property type="entry name" value="Urease_Ni-bd"/>
</dbReference>
<dbReference type="NCBIfam" id="NF009685">
    <property type="entry name" value="PRK13206.1"/>
    <property type="match status" value="1"/>
</dbReference>
<dbReference type="NCBIfam" id="NF009686">
    <property type="entry name" value="PRK13207.1"/>
    <property type="match status" value="1"/>
</dbReference>
<dbReference type="NCBIfam" id="TIGR01792">
    <property type="entry name" value="urease_alph"/>
    <property type="match status" value="1"/>
</dbReference>
<dbReference type="PANTHER" id="PTHR43440">
    <property type="entry name" value="UREASE"/>
    <property type="match status" value="1"/>
</dbReference>
<dbReference type="PANTHER" id="PTHR43440:SF1">
    <property type="entry name" value="UREASE"/>
    <property type="match status" value="1"/>
</dbReference>
<dbReference type="Pfam" id="PF01979">
    <property type="entry name" value="Amidohydro_1"/>
    <property type="match status" value="1"/>
</dbReference>
<dbReference type="Pfam" id="PF00449">
    <property type="entry name" value="Urease_alpha"/>
    <property type="match status" value="1"/>
</dbReference>
<dbReference type="PRINTS" id="PR01752">
    <property type="entry name" value="UREASE"/>
</dbReference>
<dbReference type="SUPFAM" id="SSF51338">
    <property type="entry name" value="Composite domain of metallo-dependent hydrolases"/>
    <property type="match status" value="2"/>
</dbReference>
<dbReference type="SUPFAM" id="SSF51556">
    <property type="entry name" value="Metallo-dependent hydrolases"/>
    <property type="match status" value="1"/>
</dbReference>
<dbReference type="PROSITE" id="PS01120">
    <property type="entry name" value="UREASE_1"/>
    <property type="match status" value="1"/>
</dbReference>
<dbReference type="PROSITE" id="PS00145">
    <property type="entry name" value="UREASE_2"/>
    <property type="match status" value="1"/>
</dbReference>
<dbReference type="PROSITE" id="PS51368">
    <property type="entry name" value="UREASE_3"/>
    <property type="match status" value="1"/>
</dbReference>
<reference key="1">
    <citation type="submission" date="2008-01" db="EMBL/GenBank/DDBJ databases">
        <title>Complete sequence of Pseudomonas putida GB-1.</title>
        <authorList>
            <consortium name="US DOE Joint Genome Institute"/>
            <person name="Copeland A."/>
            <person name="Lucas S."/>
            <person name="Lapidus A."/>
            <person name="Barry K."/>
            <person name="Glavina del Rio T."/>
            <person name="Dalin E."/>
            <person name="Tice H."/>
            <person name="Pitluck S."/>
            <person name="Bruce D."/>
            <person name="Goodwin L."/>
            <person name="Chertkov O."/>
            <person name="Brettin T."/>
            <person name="Detter J.C."/>
            <person name="Han C."/>
            <person name="Kuske C.R."/>
            <person name="Schmutz J."/>
            <person name="Larimer F."/>
            <person name="Land M."/>
            <person name="Hauser L."/>
            <person name="Kyrpides N."/>
            <person name="Kim E."/>
            <person name="McCarthy J.K."/>
            <person name="Richardson P."/>
        </authorList>
    </citation>
    <scope>NUCLEOTIDE SEQUENCE [LARGE SCALE GENOMIC DNA]</scope>
    <source>
        <strain>GB-1</strain>
    </source>
</reference>
<comment type="catalytic activity">
    <reaction evidence="1">
        <text>urea + 2 H2O + H(+) = hydrogencarbonate + 2 NH4(+)</text>
        <dbReference type="Rhea" id="RHEA:20557"/>
        <dbReference type="ChEBI" id="CHEBI:15377"/>
        <dbReference type="ChEBI" id="CHEBI:15378"/>
        <dbReference type="ChEBI" id="CHEBI:16199"/>
        <dbReference type="ChEBI" id="CHEBI:17544"/>
        <dbReference type="ChEBI" id="CHEBI:28938"/>
        <dbReference type="EC" id="3.5.1.5"/>
    </reaction>
</comment>
<comment type="cofactor">
    <cofactor evidence="1">
        <name>Ni cation</name>
        <dbReference type="ChEBI" id="CHEBI:25516"/>
    </cofactor>
    <text evidence="1">Binds 2 nickel ions per subunit.</text>
</comment>
<comment type="pathway">
    <text evidence="1">Nitrogen metabolism; urea degradation; CO(2) and NH(3) from urea (urease route): step 1/1.</text>
</comment>
<comment type="subunit">
    <text evidence="1">Heterotrimer of UreA (gamma), UreB (beta) and UreC (alpha) subunits. Three heterotrimers associate to form the active enzyme.</text>
</comment>
<comment type="subcellular location">
    <subcellularLocation>
        <location evidence="1">Cytoplasm</location>
    </subcellularLocation>
</comment>
<comment type="PTM">
    <text evidence="1">Carboxylation allows a single lysine to coordinate two nickel ions.</text>
</comment>
<comment type="similarity">
    <text evidence="1">Belongs to the metallo-dependent hydrolases superfamily. Urease alpha subunit family.</text>
</comment>
<name>URE1_PSEPG</name>
<feature type="chain" id="PRO_1000088495" description="Urease subunit alpha">
    <location>
        <begin position="1"/>
        <end position="567"/>
    </location>
</feature>
<feature type="active site" description="Proton donor" evidence="1">
    <location>
        <position position="320"/>
    </location>
</feature>
<feature type="binding site" evidence="1">
    <location>
        <position position="134"/>
    </location>
    <ligand>
        <name>Ni(2+)</name>
        <dbReference type="ChEBI" id="CHEBI:49786"/>
        <label>1</label>
    </ligand>
</feature>
<feature type="binding site" evidence="1">
    <location>
        <position position="136"/>
    </location>
    <ligand>
        <name>Ni(2+)</name>
        <dbReference type="ChEBI" id="CHEBI:49786"/>
        <label>1</label>
    </ligand>
</feature>
<feature type="binding site" description="via carbamate group" evidence="1">
    <location>
        <position position="217"/>
    </location>
    <ligand>
        <name>Ni(2+)</name>
        <dbReference type="ChEBI" id="CHEBI:49786"/>
        <label>1</label>
    </ligand>
</feature>
<feature type="binding site" description="via carbamate group" evidence="1">
    <location>
        <position position="217"/>
    </location>
    <ligand>
        <name>Ni(2+)</name>
        <dbReference type="ChEBI" id="CHEBI:49786"/>
        <label>2</label>
    </ligand>
</feature>
<feature type="binding site" evidence="1">
    <location>
        <position position="219"/>
    </location>
    <ligand>
        <name>substrate</name>
    </ligand>
</feature>
<feature type="binding site" evidence="1">
    <location>
        <position position="246"/>
    </location>
    <ligand>
        <name>Ni(2+)</name>
        <dbReference type="ChEBI" id="CHEBI:49786"/>
        <label>2</label>
    </ligand>
</feature>
<feature type="binding site" evidence="1">
    <location>
        <position position="272"/>
    </location>
    <ligand>
        <name>Ni(2+)</name>
        <dbReference type="ChEBI" id="CHEBI:49786"/>
        <label>2</label>
    </ligand>
</feature>
<feature type="binding site" evidence="1">
    <location>
        <position position="360"/>
    </location>
    <ligand>
        <name>Ni(2+)</name>
        <dbReference type="ChEBI" id="CHEBI:49786"/>
        <label>1</label>
    </ligand>
</feature>
<feature type="modified residue" description="N6-carboxylysine" evidence="1">
    <location>
        <position position="217"/>
    </location>
</feature>